<organism>
    <name type="scientific">Staphylococcus aureus (strain Mu3 / ATCC 700698)</name>
    <dbReference type="NCBI Taxonomy" id="418127"/>
    <lineage>
        <taxon>Bacteria</taxon>
        <taxon>Bacillati</taxon>
        <taxon>Bacillota</taxon>
        <taxon>Bacilli</taxon>
        <taxon>Bacillales</taxon>
        <taxon>Staphylococcaceae</taxon>
        <taxon>Staphylococcus</taxon>
    </lineage>
</organism>
<comment type="function">
    <text evidence="1">The glycine cleavage system catalyzes the degradation of glycine.</text>
</comment>
<comment type="catalytic activity">
    <reaction evidence="1">
        <text>N(6)-[(R)-S(8)-aminomethyldihydrolipoyl]-L-lysyl-[protein] + (6S)-5,6,7,8-tetrahydrofolate = N(6)-[(R)-dihydrolipoyl]-L-lysyl-[protein] + (6R)-5,10-methylene-5,6,7,8-tetrahydrofolate + NH4(+)</text>
        <dbReference type="Rhea" id="RHEA:16945"/>
        <dbReference type="Rhea" id="RHEA-COMP:10475"/>
        <dbReference type="Rhea" id="RHEA-COMP:10492"/>
        <dbReference type="ChEBI" id="CHEBI:15636"/>
        <dbReference type="ChEBI" id="CHEBI:28938"/>
        <dbReference type="ChEBI" id="CHEBI:57453"/>
        <dbReference type="ChEBI" id="CHEBI:83100"/>
        <dbReference type="ChEBI" id="CHEBI:83143"/>
        <dbReference type="EC" id="2.1.2.10"/>
    </reaction>
</comment>
<comment type="subunit">
    <text evidence="1">The glycine cleavage system is composed of four proteins: P, T, L and H.</text>
</comment>
<comment type="similarity">
    <text evidence="1">Belongs to the GcvT family.</text>
</comment>
<keyword id="KW-0032">Aminotransferase</keyword>
<keyword id="KW-0808">Transferase</keyword>
<protein>
    <recommendedName>
        <fullName evidence="1">Aminomethyltransferase</fullName>
        <ecNumber evidence="1">2.1.2.10</ecNumber>
    </recommendedName>
    <alternativeName>
        <fullName evidence="1">Glycine cleavage system T protein</fullName>
    </alternativeName>
</protein>
<feature type="chain" id="PRO_1000047713" description="Aminomethyltransferase">
    <location>
        <begin position="1"/>
        <end position="363"/>
    </location>
</feature>
<name>GCST_STAA1</name>
<proteinExistence type="inferred from homology"/>
<accession>A7X2S3</accession>
<sequence>MSSDLKQTPLYQNYVDRGAKIVEFGGWAMPVQFSSIKEEHNAVRYEIGLFDVSHMGEIEVTGKDASQFVQYLLSNDTDNLTTSKALYTALCNEEGGIIDDLVIYKLADDNYLLVVNAANTEKDFNWILKHKEKFDVEVQNVSNQYGQLAIQGPKARDLINQLVDEDVTEMKMFEFKQGVKLFGANVILSQSGYTGEDGFEIYCNIDDTEKIWDGLLEYNVMPCGLGARDTLRLEAGLPLHGQDLTESITPYEGGIAFASKPLIDADFIGKSVLKDQKENGAPRRTVGLELLEKGIARTGYEVMDLDGNIIGEVTSGTQSPSSGKSIALAMIKRDEFEMGRELLVQVRKRQLKAKIVKKNQIDK</sequence>
<reference key="1">
    <citation type="journal article" date="2008" name="Antimicrob. Agents Chemother.">
        <title>Mutated response regulator graR is responsible for phenotypic conversion of Staphylococcus aureus from heterogeneous vancomycin-intermediate resistance to vancomycin-intermediate resistance.</title>
        <authorList>
            <person name="Neoh H.-M."/>
            <person name="Cui L."/>
            <person name="Yuzawa H."/>
            <person name="Takeuchi F."/>
            <person name="Matsuo M."/>
            <person name="Hiramatsu K."/>
        </authorList>
    </citation>
    <scope>NUCLEOTIDE SEQUENCE [LARGE SCALE GENOMIC DNA]</scope>
    <source>
        <strain>Mu3 / ATCC 700698</strain>
    </source>
</reference>
<dbReference type="EC" id="2.1.2.10" evidence="1"/>
<dbReference type="EMBL" id="AP009324">
    <property type="protein sequence ID" value="BAF78407.1"/>
    <property type="molecule type" value="Genomic_DNA"/>
</dbReference>
<dbReference type="RefSeq" id="WP_000093349.1">
    <property type="nucleotide sequence ID" value="NC_009782.1"/>
</dbReference>
<dbReference type="SMR" id="A7X2S3"/>
<dbReference type="KEGG" id="saw:SAHV_1524"/>
<dbReference type="HOGENOM" id="CLU_007884_10_2_9"/>
<dbReference type="GO" id="GO:0005829">
    <property type="term" value="C:cytosol"/>
    <property type="evidence" value="ECO:0007669"/>
    <property type="project" value="TreeGrafter"/>
</dbReference>
<dbReference type="GO" id="GO:0005960">
    <property type="term" value="C:glycine cleavage complex"/>
    <property type="evidence" value="ECO:0007669"/>
    <property type="project" value="InterPro"/>
</dbReference>
<dbReference type="GO" id="GO:0004047">
    <property type="term" value="F:aminomethyltransferase activity"/>
    <property type="evidence" value="ECO:0007669"/>
    <property type="project" value="UniProtKB-UniRule"/>
</dbReference>
<dbReference type="GO" id="GO:0008483">
    <property type="term" value="F:transaminase activity"/>
    <property type="evidence" value="ECO:0007669"/>
    <property type="project" value="UniProtKB-KW"/>
</dbReference>
<dbReference type="GO" id="GO:0019464">
    <property type="term" value="P:glycine decarboxylation via glycine cleavage system"/>
    <property type="evidence" value="ECO:0007669"/>
    <property type="project" value="UniProtKB-UniRule"/>
</dbReference>
<dbReference type="FunFam" id="2.40.30.110:FF:000007">
    <property type="entry name" value="Aminomethyltransferase"/>
    <property type="match status" value="1"/>
</dbReference>
<dbReference type="FunFam" id="3.30.70.1400:FF:000001">
    <property type="entry name" value="Aminomethyltransferase"/>
    <property type="match status" value="1"/>
</dbReference>
<dbReference type="FunFam" id="4.10.1250.10:FF:000001">
    <property type="entry name" value="Aminomethyltransferase"/>
    <property type="match status" value="1"/>
</dbReference>
<dbReference type="Gene3D" id="2.40.30.110">
    <property type="entry name" value="Aminomethyltransferase beta-barrel domains"/>
    <property type="match status" value="1"/>
</dbReference>
<dbReference type="Gene3D" id="3.30.70.1400">
    <property type="entry name" value="Aminomethyltransferase beta-barrel domains"/>
    <property type="match status" value="1"/>
</dbReference>
<dbReference type="Gene3D" id="4.10.1250.10">
    <property type="entry name" value="Aminomethyltransferase fragment"/>
    <property type="match status" value="1"/>
</dbReference>
<dbReference type="Gene3D" id="3.30.1360.120">
    <property type="entry name" value="Probable tRNA modification gtpase trme, domain 1"/>
    <property type="match status" value="1"/>
</dbReference>
<dbReference type="HAMAP" id="MF_00259">
    <property type="entry name" value="GcvT"/>
    <property type="match status" value="1"/>
</dbReference>
<dbReference type="InterPro" id="IPR006223">
    <property type="entry name" value="GCS_T"/>
</dbReference>
<dbReference type="InterPro" id="IPR022903">
    <property type="entry name" value="GCS_T_bac"/>
</dbReference>
<dbReference type="InterPro" id="IPR013977">
    <property type="entry name" value="GCST_C"/>
</dbReference>
<dbReference type="InterPro" id="IPR006222">
    <property type="entry name" value="GCV_T_N"/>
</dbReference>
<dbReference type="InterPro" id="IPR028896">
    <property type="entry name" value="GcvT/YgfZ/DmdA"/>
</dbReference>
<dbReference type="InterPro" id="IPR029043">
    <property type="entry name" value="GcvT/YgfZ_C"/>
</dbReference>
<dbReference type="InterPro" id="IPR027266">
    <property type="entry name" value="TrmE/GcvT_dom1"/>
</dbReference>
<dbReference type="NCBIfam" id="TIGR00528">
    <property type="entry name" value="gcvT"/>
    <property type="match status" value="1"/>
</dbReference>
<dbReference type="NCBIfam" id="NF001567">
    <property type="entry name" value="PRK00389.1"/>
    <property type="match status" value="1"/>
</dbReference>
<dbReference type="PANTHER" id="PTHR43757">
    <property type="entry name" value="AMINOMETHYLTRANSFERASE"/>
    <property type="match status" value="1"/>
</dbReference>
<dbReference type="PANTHER" id="PTHR43757:SF2">
    <property type="entry name" value="AMINOMETHYLTRANSFERASE, MITOCHONDRIAL"/>
    <property type="match status" value="1"/>
</dbReference>
<dbReference type="Pfam" id="PF01571">
    <property type="entry name" value="GCV_T"/>
    <property type="match status" value="1"/>
</dbReference>
<dbReference type="Pfam" id="PF08669">
    <property type="entry name" value="GCV_T_C"/>
    <property type="match status" value="1"/>
</dbReference>
<dbReference type="PIRSF" id="PIRSF006487">
    <property type="entry name" value="GcvT"/>
    <property type="match status" value="1"/>
</dbReference>
<dbReference type="SUPFAM" id="SSF101790">
    <property type="entry name" value="Aminomethyltransferase beta-barrel domain"/>
    <property type="match status" value="1"/>
</dbReference>
<dbReference type="SUPFAM" id="SSF103025">
    <property type="entry name" value="Folate-binding domain"/>
    <property type="match status" value="1"/>
</dbReference>
<evidence type="ECO:0000255" key="1">
    <source>
        <dbReference type="HAMAP-Rule" id="MF_00259"/>
    </source>
</evidence>
<gene>
    <name evidence="1" type="primary">gcvT</name>
    <name type="ordered locus">SAHV_1524</name>
</gene>